<evidence type="ECO:0000250" key="1"/>
<evidence type="ECO:0000250" key="2">
    <source>
        <dbReference type="UniProtKB" id="P59997"/>
    </source>
</evidence>
<evidence type="ECO:0000255" key="3">
    <source>
        <dbReference type="PROSITE-ProRule" id="PRU00146"/>
    </source>
</evidence>
<evidence type="ECO:0000255" key="4">
    <source>
        <dbReference type="PROSITE-ProRule" id="PRU00509"/>
    </source>
</evidence>
<evidence type="ECO:0000255" key="5">
    <source>
        <dbReference type="PROSITE-ProRule" id="PRU00538"/>
    </source>
</evidence>
<evidence type="ECO:0000256" key="6">
    <source>
        <dbReference type="SAM" id="MobiDB-lite"/>
    </source>
</evidence>
<evidence type="ECO:0000269" key="7">
    <source>
    </source>
</evidence>
<evidence type="ECO:0000269" key="8">
    <source>
    </source>
</evidence>
<evidence type="ECO:0000269" key="9">
    <source>
    </source>
</evidence>
<evidence type="ECO:0000269" key="10">
    <source>
    </source>
</evidence>
<evidence type="ECO:0000269" key="11">
    <source>
    </source>
</evidence>
<evidence type="ECO:0000269" key="12">
    <source>
    </source>
</evidence>
<evidence type="ECO:0000269" key="13">
    <source>
    </source>
</evidence>
<evidence type="ECO:0000269" key="14">
    <source ref="27"/>
</evidence>
<evidence type="ECO:0000269" key="15">
    <source ref="28"/>
</evidence>
<evidence type="ECO:0000303" key="16">
    <source>
    </source>
</evidence>
<evidence type="ECO:0000303" key="17">
    <source>
    </source>
</evidence>
<evidence type="ECO:0000303" key="18">
    <source ref="2"/>
</evidence>
<evidence type="ECO:0000303" key="19">
    <source ref="3"/>
</evidence>
<evidence type="ECO:0000305" key="20"/>
<evidence type="ECO:0000305" key="21">
    <source>
    </source>
</evidence>
<evidence type="ECO:0007744" key="22">
    <source>
        <dbReference type="PDB" id="2YU1"/>
    </source>
</evidence>
<evidence type="ECO:0007744" key="23">
    <source>
        <dbReference type="PDB" id="2YU2"/>
    </source>
</evidence>
<evidence type="ECO:0007744" key="24">
    <source>
        <dbReference type="PDB" id="4BBQ"/>
    </source>
</evidence>
<evidence type="ECO:0007744" key="25">
    <source>
        <dbReference type="PDB" id="6BYH"/>
    </source>
</evidence>
<evidence type="ECO:0007744" key="26">
    <source>
        <dbReference type="PDB" id="6C16"/>
    </source>
</evidence>
<evidence type="ECO:0007744" key="27">
    <source>
    </source>
</evidence>
<evidence type="ECO:0007744" key="28">
    <source>
    </source>
</evidence>
<evidence type="ECO:0007744" key="29">
    <source>
    </source>
</evidence>
<evidence type="ECO:0007744" key="30">
    <source>
    </source>
</evidence>
<evidence type="ECO:0007744" key="31">
    <source>
    </source>
</evidence>
<evidence type="ECO:0007744" key="32">
    <source>
    </source>
</evidence>
<evidence type="ECO:0007744" key="33">
    <source>
    </source>
</evidence>
<evidence type="ECO:0007744" key="34">
    <source>
    </source>
</evidence>
<evidence type="ECO:0007744" key="35">
    <source>
    </source>
</evidence>
<evidence type="ECO:0007744" key="36">
    <source>
    </source>
</evidence>
<evidence type="ECO:0007829" key="37">
    <source>
        <dbReference type="PDB" id="2YU1"/>
    </source>
</evidence>
<evidence type="ECO:0007829" key="38">
    <source>
        <dbReference type="PDB" id="2YU2"/>
    </source>
</evidence>
<evidence type="ECO:0007829" key="39">
    <source>
        <dbReference type="PDB" id="4BBQ"/>
    </source>
</evidence>
<evidence type="ECO:0007829" key="40">
    <source>
        <dbReference type="PDB" id="6BYH"/>
    </source>
</evidence>
<evidence type="ECO:0007829" key="41">
    <source>
        <dbReference type="PDB" id="7UV9"/>
    </source>
</evidence>
<feature type="chain" id="PRO_0000119855" description="Lysine-specific demethylase 2A">
    <location>
        <begin position="1"/>
        <end position="1162"/>
    </location>
</feature>
<feature type="domain" description="JmjC" evidence="5">
    <location>
        <begin position="148"/>
        <end position="316"/>
    </location>
</feature>
<feature type="domain" description="F-box">
    <location>
        <begin position="889"/>
        <end position="936"/>
    </location>
</feature>
<feature type="repeat" description="LRR 1">
    <location>
        <begin position="961"/>
        <end position="982"/>
    </location>
</feature>
<feature type="repeat" description="LRR 2">
    <location>
        <begin position="984"/>
        <end position="1010"/>
    </location>
</feature>
<feature type="repeat" description="LRR 3">
    <location>
        <begin position="1048"/>
        <end position="1073"/>
    </location>
</feature>
<feature type="repeat" description="LRR 4">
    <location>
        <begin position="1074"/>
        <end position="1103"/>
    </location>
</feature>
<feature type="repeat" description="LRR 5">
    <location>
        <begin position="1104"/>
        <end position="1128"/>
    </location>
</feature>
<feature type="repeat" description="LRR 6">
    <location>
        <begin position="1129"/>
        <end position="1156"/>
    </location>
</feature>
<feature type="zinc finger region" description="CXXC-type" evidence="4 24">
    <location>
        <begin position="564"/>
        <end position="610"/>
    </location>
</feature>
<feature type="zinc finger region" description="PHD-type" evidence="3 24">
    <location>
        <begin position="617"/>
        <end position="678"/>
    </location>
</feature>
<feature type="region of interest" description="Disordered" evidence="6">
    <location>
        <begin position="367"/>
        <end position="389"/>
    </location>
</feature>
<feature type="region of interest" description="Disordered" evidence="6">
    <location>
        <begin position="532"/>
        <end position="557"/>
    </location>
</feature>
<feature type="region of interest" description="Disordered" evidence="6">
    <location>
        <begin position="704"/>
        <end position="789"/>
    </location>
</feature>
<feature type="region of interest" description="Disordered" evidence="6">
    <location>
        <begin position="839"/>
        <end position="887"/>
    </location>
</feature>
<feature type="compositionally biased region" description="Basic and acidic residues" evidence="6">
    <location>
        <begin position="746"/>
        <end position="757"/>
    </location>
</feature>
<feature type="compositionally biased region" description="Basic and acidic residues" evidence="6">
    <location>
        <begin position="771"/>
        <end position="789"/>
    </location>
</feature>
<feature type="compositionally biased region" description="Acidic residues" evidence="6">
    <location>
        <begin position="851"/>
        <end position="871"/>
    </location>
</feature>
<feature type="binding site" evidence="1">
    <location>
        <position position="209"/>
    </location>
    <ligand>
        <name>substrate</name>
    </ligand>
</feature>
<feature type="binding site" evidence="21 22 23">
    <location>
        <position position="212"/>
    </location>
    <ligand>
        <name>Fe cation</name>
        <dbReference type="ChEBI" id="CHEBI:24875"/>
        <note>catalytic</note>
    </ligand>
</feature>
<feature type="binding site" evidence="5 14 22 23">
    <location>
        <position position="214"/>
    </location>
    <ligand>
        <name>Fe cation</name>
        <dbReference type="ChEBI" id="CHEBI:24875"/>
        <note>catalytic</note>
    </ligand>
</feature>
<feature type="binding site" evidence="1">
    <location>
        <position position="229"/>
    </location>
    <ligand>
        <name>substrate</name>
    </ligand>
</feature>
<feature type="binding site" evidence="5 14 22 23">
    <location>
        <position position="284"/>
    </location>
    <ligand>
        <name>Fe cation</name>
        <dbReference type="ChEBI" id="CHEBI:24875"/>
        <note>catalytic</note>
    </ligand>
</feature>
<feature type="binding site" evidence="4 15 24">
    <location>
        <position position="571"/>
    </location>
    <ligand>
        <name>Zn(2+)</name>
        <dbReference type="ChEBI" id="CHEBI:29105"/>
        <label>1</label>
    </ligand>
</feature>
<feature type="binding site" evidence="4 15 24">
    <location>
        <position position="574"/>
    </location>
    <ligand>
        <name>Zn(2+)</name>
        <dbReference type="ChEBI" id="CHEBI:29105"/>
        <label>1</label>
    </ligand>
</feature>
<feature type="binding site" evidence="4 15 24">
    <location>
        <position position="577"/>
    </location>
    <ligand>
        <name>Zn(2+)</name>
        <dbReference type="ChEBI" id="CHEBI:29105"/>
        <label>1</label>
    </ligand>
</feature>
<feature type="binding site" evidence="4 15 24">
    <location>
        <position position="582"/>
    </location>
    <ligand>
        <name>Zn(2+)</name>
        <dbReference type="ChEBI" id="CHEBI:29105"/>
        <label>2</label>
    </ligand>
</feature>
<feature type="binding site" evidence="4 15 24">
    <location>
        <position position="585"/>
    </location>
    <ligand>
        <name>Zn(2+)</name>
        <dbReference type="ChEBI" id="CHEBI:29105"/>
        <label>2</label>
    </ligand>
</feature>
<feature type="binding site" evidence="4 15 24">
    <location>
        <position position="588"/>
    </location>
    <ligand>
        <name>Zn(2+)</name>
        <dbReference type="ChEBI" id="CHEBI:29105"/>
        <label>2</label>
    </ligand>
</feature>
<feature type="binding site" evidence="4 15 24">
    <location>
        <position position="604"/>
    </location>
    <ligand>
        <name>Zn(2+)</name>
        <dbReference type="ChEBI" id="CHEBI:29105"/>
        <label>2</label>
    </ligand>
</feature>
<feature type="binding site" evidence="4 15 24">
    <location>
        <position position="609"/>
    </location>
    <ligand>
        <name>Zn(2+)</name>
        <dbReference type="ChEBI" id="CHEBI:29105"/>
        <label>1</label>
    </ligand>
</feature>
<feature type="binding site" evidence="15 24">
    <location>
        <position position="620"/>
    </location>
    <ligand>
        <name>Zn(2+)</name>
        <dbReference type="ChEBI" id="CHEBI:29105"/>
        <label>3</label>
    </ligand>
</feature>
<feature type="binding site" evidence="15 24">
    <location>
        <position position="623"/>
    </location>
    <ligand>
        <name>Zn(2+)</name>
        <dbReference type="ChEBI" id="CHEBI:29105"/>
        <label>3</label>
    </ligand>
</feature>
<feature type="binding site" evidence="15 24">
    <location>
        <position position="642"/>
    </location>
    <ligand>
        <name>Zn(2+)</name>
        <dbReference type="ChEBI" id="CHEBI:29105"/>
        <label>4</label>
    </ligand>
</feature>
<feature type="binding site" evidence="15 24">
    <location>
        <position position="645"/>
    </location>
    <ligand>
        <name>Zn(2+)</name>
        <dbReference type="ChEBI" id="CHEBI:29105"/>
        <label>4</label>
    </ligand>
</feature>
<feature type="binding site" evidence="15 24">
    <location>
        <position position="650"/>
    </location>
    <ligand>
        <name>Zn(2+)</name>
        <dbReference type="ChEBI" id="CHEBI:29105"/>
        <label>3</label>
    </ligand>
</feature>
<feature type="binding site" evidence="15 24">
    <location>
        <position position="653"/>
    </location>
    <ligand>
        <name>Zn(2+)</name>
        <dbReference type="ChEBI" id="CHEBI:29105"/>
        <label>3</label>
    </ligand>
</feature>
<feature type="binding site" evidence="15 24">
    <location>
        <position position="672"/>
    </location>
    <ligand>
        <name>Zn(2+)</name>
        <dbReference type="ChEBI" id="CHEBI:29105"/>
        <label>4</label>
    </ligand>
</feature>
<feature type="binding site" evidence="15 24">
    <location>
        <position position="675"/>
    </location>
    <ligand>
        <name>Zn(2+)</name>
        <dbReference type="ChEBI" id="CHEBI:29105"/>
        <label>4</label>
    </ligand>
</feature>
<feature type="modified residue" description="Phosphoserine" evidence="27 32 33 34 35">
    <location>
        <position position="28"/>
    </location>
</feature>
<feature type="modified residue" description="Phosphoserine" evidence="30">
    <location>
        <position position="390"/>
    </location>
</feature>
<feature type="modified residue" description="Phosphoserine" evidence="33">
    <location>
        <position position="394"/>
    </location>
</feature>
<feature type="modified residue" description="Phosphothreonine" evidence="29 30 32 33 35">
    <location>
        <position position="550"/>
    </location>
</feature>
<feature type="modified residue" description="Phosphoserine" evidence="29 30 33 35">
    <location>
        <position position="558"/>
    </location>
</feature>
<feature type="modified residue" description="Phosphothreonine" evidence="28">
    <location>
        <position position="632"/>
    </location>
</feature>
<feature type="modified residue" description="Phosphoserine" evidence="31 32 35">
    <location>
        <position position="692"/>
    </location>
</feature>
<feature type="modified residue" description="Phosphothreonine" evidence="29 30">
    <location>
        <position position="713"/>
    </location>
</feature>
<feature type="modified residue" description="Phosphoserine" evidence="2">
    <location>
        <position position="718"/>
    </location>
</feature>
<feature type="modified residue" description="Phosphoserine" evidence="29 30">
    <location>
        <position position="731"/>
    </location>
</feature>
<feature type="modified residue" description="Phosphoserine" evidence="35">
    <location>
        <position position="825"/>
    </location>
</feature>
<feature type="modified residue" description="Phosphoserine" evidence="30 35">
    <location>
        <position position="832"/>
    </location>
</feature>
<feature type="modified residue" description="Phosphoserine" evidence="32 33 35">
    <location>
        <position position="869"/>
    </location>
</feature>
<feature type="modified residue" description="Phosphoserine" evidence="33">
    <location>
        <position position="883"/>
    </location>
</feature>
<feature type="modified residue" description="ADP-ribosylarginine" evidence="2">
    <location>
        <position position="1020"/>
    </location>
</feature>
<feature type="cross-link" description="Glycyl lysine isopeptide (Lys-Gly) (interchain with G-Cter in SUMO2)" evidence="36">
    <location>
        <position position="505"/>
    </location>
</feature>
<feature type="splice variant" id="VSP_046938" description="In isoform 4." evidence="19">
    <location>
        <begin position="1"/>
        <end position="542"/>
    </location>
</feature>
<feature type="splice variant" id="VSP_046939" description="In isoform 5." evidence="18">
    <location>
        <begin position="1"/>
        <end position="439"/>
    </location>
</feature>
<feature type="splice variant" id="VSP_017468" description="In isoform 2." evidence="16">
    <location>
        <begin position="1"/>
        <end position="306"/>
    </location>
</feature>
<feature type="splice variant" id="VSP_046940" description="In isoform 5." evidence="18">
    <original>DPQCAPRKDRQVHLTHFELEGLRCLVDKLESLPLHKKCVPTGIEDEDALIADV</original>
    <variation>MCSGRFQNIQVNPDFPRGRISNSFRRTSSTENKTKTLGKLHQEPRQLQSDGKR</variation>
    <location>
        <begin position="440"/>
        <end position="492"/>
    </location>
</feature>
<feature type="splice variant" id="VSP_017469" description="In isoform 3." evidence="16 19">
    <original>REKENNPSG</original>
    <variation>LRQETLDKN</variation>
    <location>
        <begin position="774"/>
        <end position="782"/>
    </location>
</feature>
<feature type="splice variant" id="VSP_017470" description="In isoform 3." evidence="16 19">
    <location>
        <begin position="783"/>
        <end position="1162"/>
    </location>
</feature>
<feature type="mutagenesis site" description="Abolishes lysine-specific histone demethylase activity." evidence="12">
    <original>HVD</original>
    <variation>AVA</variation>
    <location>
        <begin position="212"/>
        <end position="214"/>
    </location>
</feature>
<feature type="mutagenesis site" description="Abolishes histone demethylase activity. No loss of its ability to repress the transcriptional activator activity of the CLOCK-BMAL1 heterodimer." evidence="8 11">
    <original>H</original>
    <variation>A</variation>
    <location>
        <position position="212"/>
    </location>
</feature>
<feature type="mutagenesis site" description="Abolishes association with centromeric heterochromatin; when associated with A-574 and A-577." evidence="9">
    <original>C</original>
    <variation>A</variation>
    <location>
        <position position="571"/>
    </location>
</feature>
<feature type="mutagenesis site" description="Abolishes association with centromeric heterochromatin; when associated with A-571 and A-577. Loss of its ability to repress the transcriptional activator activity of the CLOCK-BMAL1 heterodimer; when associated with A-577." evidence="9 11">
    <original>C</original>
    <variation>A</variation>
    <location>
        <position position="574"/>
    </location>
</feature>
<feature type="mutagenesis site" description="Abolishes association with centromeric heterochromatin; when associated with A-571 and A-574. Loss of its ability to repress the transcriptional activator activity of the CLOCK-BMAL1 heterodimer; when associated with A-574." evidence="9 11">
    <original>C</original>
    <variation>A</variation>
    <location>
        <position position="577"/>
    </location>
</feature>
<feature type="mutagenesis site" description="No loss of its ability to repress the transcriptional activator activity of the CLOCK-BMAL1 heterodimer; when associated with A-623." evidence="11">
    <original>C</original>
    <variation>A</variation>
    <location>
        <position position="620"/>
    </location>
</feature>
<feature type="mutagenesis site" description="No loss of its ability to repress the transcriptional activator activity of the CLOCK-BMAL1 heterodimer; when associated with A-620." evidence="11">
    <original>C</original>
    <variation>A</variation>
    <location>
        <position position="623"/>
    </location>
</feature>
<feature type="mutagenesis site" description="Reduced interaction with UBB." evidence="13">
    <original>W</original>
    <variation>V</variation>
    <location>
        <position position="892"/>
    </location>
</feature>
<feature type="sequence conflict" description="In Ref. 8; AAH47371." evidence="20" ref="8">
    <original>K</original>
    <variation>I</variation>
    <location>
        <position position="518"/>
    </location>
</feature>
<feature type="sequence conflict" description="In Ref. 8; AAH47371." evidence="20" ref="8">
    <original>D</original>
    <variation>G</variation>
    <location>
        <position position="657"/>
    </location>
</feature>
<feature type="sequence conflict" description="In Ref. 8; AAH01203." evidence="20" ref="8">
    <location>
        <position position="1128"/>
    </location>
</feature>
<feature type="strand" evidence="38">
    <location>
        <begin position="36"/>
        <end position="38"/>
    </location>
</feature>
<feature type="helix" evidence="37">
    <location>
        <begin position="40"/>
        <end position="45"/>
    </location>
</feature>
<feature type="helix" evidence="37">
    <location>
        <begin position="59"/>
        <end position="61"/>
    </location>
</feature>
<feature type="helix" evidence="37">
    <location>
        <begin position="64"/>
        <end position="70"/>
    </location>
</feature>
<feature type="strand" evidence="37">
    <location>
        <begin position="76"/>
        <end position="80"/>
    </location>
</feature>
<feature type="turn" evidence="38">
    <location>
        <begin position="82"/>
        <end position="85"/>
    </location>
</feature>
<feature type="helix" evidence="37">
    <location>
        <begin position="95"/>
        <end position="101"/>
    </location>
</feature>
<feature type="strand" evidence="41">
    <location>
        <begin position="107"/>
        <end position="112"/>
    </location>
</feature>
<feature type="turn" evidence="41">
    <location>
        <begin position="113"/>
        <end position="116"/>
    </location>
</feature>
<feature type="strand" evidence="41">
    <location>
        <begin position="117"/>
        <end position="122"/>
    </location>
</feature>
<feature type="helix" evidence="37">
    <location>
        <begin position="123"/>
        <end position="130"/>
    </location>
</feature>
<feature type="turn" evidence="37">
    <location>
        <begin position="134"/>
        <end position="136"/>
    </location>
</feature>
<feature type="strand" evidence="37">
    <location>
        <begin position="141"/>
        <end position="146"/>
    </location>
</feature>
<feature type="helix" evidence="37">
    <location>
        <begin position="154"/>
        <end position="156"/>
    </location>
</feature>
<feature type="helix" evidence="37">
    <location>
        <begin position="161"/>
        <end position="166"/>
    </location>
</feature>
<feature type="helix" evidence="37">
    <location>
        <begin position="168"/>
        <end position="172"/>
    </location>
</feature>
<feature type="helix" evidence="37">
    <location>
        <begin position="175"/>
        <end position="177"/>
    </location>
</feature>
<feature type="helix" evidence="41">
    <location>
        <begin position="188"/>
        <end position="190"/>
    </location>
</feature>
<feature type="strand" evidence="37">
    <location>
        <begin position="199"/>
        <end position="203"/>
    </location>
</feature>
<feature type="strand" evidence="37">
    <location>
        <begin position="208"/>
        <end position="212"/>
    </location>
</feature>
<feature type="helix" evidence="37">
    <location>
        <begin position="215"/>
        <end position="217"/>
    </location>
</feature>
<feature type="strand" evidence="37">
    <location>
        <begin position="219"/>
        <end position="227"/>
    </location>
</feature>
<feature type="strand" evidence="37">
    <location>
        <begin position="229"/>
        <end position="234"/>
    </location>
</feature>
<feature type="helix" evidence="37">
    <location>
        <begin position="238"/>
        <end position="249"/>
    </location>
</feature>
<feature type="strand" evidence="37">
    <location>
        <begin position="254"/>
        <end position="256"/>
    </location>
</feature>
<feature type="helix" evidence="37">
    <location>
        <begin position="258"/>
        <end position="261"/>
    </location>
</feature>
<feature type="strand" evidence="37">
    <location>
        <begin position="266"/>
        <end position="270"/>
    </location>
</feature>
<feature type="strand" evidence="37">
    <location>
        <begin position="275"/>
        <end position="278"/>
    </location>
</feature>
<feature type="strand" evidence="37">
    <location>
        <begin position="283"/>
        <end position="287"/>
    </location>
</feature>
<feature type="strand" evidence="37">
    <location>
        <begin position="292"/>
        <end position="299"/>
    </location>
</feature>
<feature type="strand" evidence="37">
    <location>
        <begin position="302"/>
        <end position="304"/>
    </location>
</feature>
<feature type="helix" evidence="37">
    <location>
        <begin position="305"/>
        <end position="317"/>
    </location>
</feature>
<feature type="helix" evidence="41">
    <location>
        <begin position="322"/>
        <end position="324"/>
    </location>
</feature>
<feature type="helix" evidence="37">
    <location>
        <begin position="329"/>
        <end position="345"/>
    </location>
</feature>
<feature type="helix" evidence="37">
    <location>
        <begin position="352"/>
        <end position="362"/>
    </location>
</feature>
<feature type="helix" evidence="37">
    <location>
        <begin position="455"/>
        <end position="469"/>
    </location>
</feature>
<feature type="helix" evidence="37">
    <location>
        <begin position="473"/>
        <end position="475"/>
    </location>
</feature>
<feature type="strand" evidence="37">
    <location>
        <begin position="480"/>
        <end position="483"/>
    </location>
</feature>
<feature type="helix" evidence="37">
    <location>
        <begin position="485"/>
        <end position="498"/>
    </location>
</feature>
<feature type="strand" evidence="37">
    <location>
        <begin position="499"/>
        <end position="501"/>
    </location>
</feature>
<feature type="helix" evidence="37">
    <location>
        <begin position="504"/>
        <end position="507"/>
    </location>
</feature>
<feature type="helix" evidence="39">
    <location>
        <begin position="575"/>
        <end position="578"/>
    </location>
</feature>
<feature type="helix" evidence="39">
    <location>
        <begin position="586"/>
        <end position="590"/>
    </location>
</feature>
<feature type="helix" evidence="39">
    <location>
        <begin position="592"/>
        <end position="594"/>
    </location>
</feature>
<feature type="helix" evidence="39">
    <location>
        <begin position="605"/>
        <end position="607"/>
    </location>
</feature>
<feature type="turn" evidence="39">
    <location>
        <begin position="621"/>
        <end position="623"/>
    </location>
</feature>
<feature type="helix" evidence="39">
    <location>
        <begin position="629"/>
        <end position="632"/>
    </location>
</feature>
<feature type="helix" evidence="39">
    <location>
        <begin position="635"/>
        <end position="637"/>
    </location>
</feature>
<feature type="strand" evidence="39">
    <location>
        <begin position="640"/>
        <end position="642"/>
    </location>
</feature>
<feature type="turn" evidence="39">
    <location>
        <begin position="643"/>
        <end position="645"/>
    </location>
</feature>
<feature type="helix" evidence="39">
    <location>
        <begin position="651"/>
        <end position="653"/>
    </location>
</feature>
<feature type="strand" evidence="39">
    <location>
        <begin position="664"/>
        <end position="671"/>
    </location>
</feature>
<feature type="turn" evidence="39">
    <location>
        <begin position="673"/>
        <end position="675"/>
    </location>
</feature>
<feature type="helix" evidence="40">
    <location>
        <begin position="892"/>
        <end position="902"/>
    </location>
</feature>
<feature type="helix" evidence="40">
    <location>
        <begin position="907"/>
        <end position="913"/>
    </location>
</feature>
<feature type="turn" evidence="40">
    <location>
        <begin position="914"/>
        <end position="916"/>
    </location>
</feature>
<feature type="helix" evidence="40">
    <location>
        <begin position="918"/>
        <end position="923"/>
    </location>
</feature>
<reference key="1">
    <citation type="journal article" date="2000" name="Genomics">
        <title>cDNA cloning and expression analysis of new members of the mammalian F-box protein family.</title>
        <authorList>
            <person name="Ilyin G.P."/>
            <person name="Rialland M."/>
            <person name="Pigeon C."/>
            <person name="Guguen-Guillouzo C."/>
        </authorList>
    </citation>
    <scope>NUCLEOTIDE SEQUENCE [MRNA] (ISOFORM 1)</scope>
</reference>
<reference key="2">
    <citation type="submission" date="2009-03" db="EMBL/GenBank/DDBJ databases">
        <authorList>
            <person name="Tsuneoka M."/>
            <person name="Tanaka Y."/>
            <person name="Okamoto K."/>
            <person name="Teye K."/>
        </authorList>
    </citation>
    <scope>NUCLEOTIDE SEQUENCE [MRNA] (ISOFORM 5)</scope>
</reference>
<reference key="3">
    <citation type="submission" date="2012-02" db="EMBL/GenBank/DDBJ databases">
        <authorList>
            <person name="Iuchi S."/>
            <person name="Green H."/>
        </authorList>
    </citation>
    <scope>NUCLEOTIDE SEQUENCE [MRNA] (ISOFORMS 3 AND 4)</scope>
</reference>
<reference key="4">
    <citation type="journal article" date="1999" name="DNA Res.">
        <title>Prediction of the coding sequences of unidentified human genes. XIII. The complete sequences of 100 new cDNA clones from brain which code for large proteins in vitro.</title>
        <authorList>
            <person name="Nagase T."/>
            <person name="Ishikawa K."/>
            <person name="Suyama M."/>
            <person name="Kikuno R."/>
            <person name="Hirosawa M."/>
            <person name="Miyajima N."/>
            <person name="Tanaka A."/>
            <person name="Kotani H."/>
            <person name="Nomura N."/>
            <person name="Ohara O."/>
        </authorList>
    </citation>
    <scope>NUCLEOTIDE SEQUENCE [LARGE SCALE MRNA] (ISOFORM 1)</scope>
    <scope>TISSUE SPECIFICITY</scope>
    <source>
        <tissue>Brain</tissue>
    </source>
</reference>
<reference key="5">
    <citation type="journal article" date="2002" name="DNA Res.">
        <title>Construction of expression-ready cDNA clones for KIAA genes: manual curation of 330 KIAA cDNA clones.</title>
        <authorList>
            <person name="Nakajima D."/>
            <person name="Okazaki N."/>
            <person name="Yamakawa H."/>
            <person name="Kikuno R."/>
            <person name="Ohara O."/>
            <person name="Nagase T."/>
        </authorList>
    </citation>
    <scope>SEQUENCE REVISION</scope>
</reference>
<reference key="6">
    <citation type="journal article" date="2000" name="DNA Res.">
        <title>Characterization of long cDNA clones from human adult spleen.</title>
        <authorList>
            <person name="Hattori A."/>
            <person name="Okumura K."/>
            <person name="Nagase T."/>
            <person name="Kikuno R."/>
            <person name="Hirosawa M."/>
            <person name="Ohara O."/>
        </authorList>
    </citation>
    <scope>NUCLEOTIDE SEQUENCE [LARGE SCALE MRNA] (ISOFORM 1)</scope>
    <source>
        <tissue>Spleen</tissue>
    </source>
</reference>
<reference key="7">
    <citation type="journal article" date="2006" name="Nature">
        <title>Human chromosome 11 DNA sequence and analysis including novel gene identification.</title>
        <authorList>
            <person name="Taylor T.D."/>
            <person name="Noguchi H."/>
            <person name="Totoki Y."/>
            <person name="Toyoda A."/>
            <person name="Kuroki Y."/>
            <person name="Dewar K."/>
            <person name="Lloyd C."/>
            <person name="Itoh T."/>
            <person name="Takeda T."/>
            <person name="Kim D.-W."/>
            <person name="She X."/>
            <person name="Barlow K.F."/>
            <person name="Bloom T."/>
            <person name="Bruford E."/>
            <person name="Chang J.L."/>
            <person name="Cuomo C.A."/>
            <person name="Eichler E."/>
            <person name="FitzGerald M.G."/>
            <person name="Jaffe D.B."/>
            <person name="LaButti K."/>
            <person name="Nicol R."/>
            <person name="Park H.-S."/>
            <person name="Seaman C."/>
            <person name="Sougnez C."/>
            <person name="Yang X."/>
            <person name="Zimmer A.R."/>
            <person name="Zody M.C."/>
            <person name="Birren B.W."/>
            <person name="Nusbaum C."/>
            <person name="Fujiyama A."/>
            <person name="Hattori M."/>
            <person name="Rogers J."/>
            <person name="Lander E.S."/>
            <person name="Sakaki Y."/>
        </authorList>
    </citation>
    <scope>NUCLEOTIDE SEQUENCE [LARGE SCALE GENOMIC DNA]</scope>
</reference>
<reference key="8">
    <citation type="journal article" date="2004" name="Genome Res.">
        <title>The status, quality, and expansion of the NIH full-length cDNA project: the Mammalian Gene Collection (MGC).</title>
        <authorList>
            <consortium name="The MGC Project Team"/>
        </authorList>
    </citation>
    <scope>NUCLEOTIDE SEQUENCE [LARGE SCALE MRNA] (ISOFORMS 1; 2 AND 3)</scope>
    <source>
        <tissue>Eye</tissue>
        <tissue>Testis</tissue>
        <tissue>Uterus</tissue>
    </source>
</reference>
<reference key="9">
    <citation type="submission" date="1999-08" db="EMBL/GenBank/DDBJ databases">
        <authorList>
            <person name="Pagano M."/>
        </authorList>
    </citation>
    <scope>NUCLEOTIDE SEQUENCE [MRNA] OF 667-1162</scope>
</reference>
<reference key="10">
    <citation type="journal article" date="2007" name="BMC Genomics">
        <title>The full-ORF clone resource of the German cDNA consortium.</title>
        <authorList>
            <person name="Bechtel S."/>
            <person name="Rosenfelder H."/>
            <person name="Duda A."/>
            <person name="Schmidt C.P."/>
            <person name="Ernst U."/>
            <person name="Wellenreuther R."/>
            <person name="Mehrle A."/>
            <person name="Schuster C."/>
            <person name="Bahr A."/>
            <person name="Bloecker H."/>
            <person name="Heubner D."/>
            <person name="Hoerlein A."/>
            <person name="Michel G."/>
            <person name="Wedler H."/>
            <person name="Koehrer K."/>
            <person name="Ottenwaelder B."/>
            <person name="Poustka A."/>
            <person name="Wiemann S."/>
            <person name="Schupp I."/>
        </authorList>
    </citation>
    <scope>NUCLEOTIDE SEQUENCE [LARGE SCALE MRNA] OF 1134-1162</scope>
    <source>
        <tissue>Testis</tissue>
    </source>
</reference>
<reference key="11">
    <citation type="journal article" date="2006" name="Cell">
        <title>Global, in vivo, and site-specific phosphorylation dynamics in signaling networks.</title>
        <authorList>
            <person name="Olsen J.V."/>
            <person name="Blagoev B."/>
            <person name="Gnad F."/>
            <person name="Macek B."/>
            <person name="Kumar C."/>
            <person name="Mortensen P."/>
            <person name="Mann M."/>
        </authorList>
    </citation>
    <scope>PHOSPHORYLATION [LARGE SCALE ANALYSIS] AT SER-28</scope>
    <scope>IDENTIFICATION BY MASS SPECTROMETRY [LARGE SCALE ANALYSIS]</scope>
    <source>
        <tissue>Cervix carcinoma</tissue>
    </source>
</reference>
<reference key="12">
    <citation type="journal article" date="2006" name="Nature">
        <title>Histone demethylation by a family of JmjC domain-containing proteins.</title>
        <authorList>
            <person name="Tsukada Y."/>
            <person name="Fang J."/>
            <person name="Erdjument-Bromage H."/>
            <person name="Warren M.E."/>
            <person name="Borchers C.H."/>
            <person name="Tempst P."/>
            <person name="Zhang Y."/>
        </authorList>
    </citation>
    <scope>IDENTIFICATION BY MASS SPECTROMETRY</scope>
    <scope>FUNCTION</scope>
    <scope>CATALYTIC ACTIVITY</scope>
    <scope>COFACTOR</scope>
    <scope>DOMAIN JMJC</scope>
    <scope>MUTAGENESIS OF HIS-212</scope>
</reference>
<reference key="13">
    <citation type="journal article" date="2007" name="Science">
        <title>ATM and ATR substrate analysis reveals extensive protein networks responsive to DNA damage.</title>
        <authorList>
            <person name="Matsuoka S."/>
            <person name="Ballif B.A."/>
            <person name="Smogorzewska A."/>
            <person name="McDonald E.R. III"/>
            <person name="Hurov K.E."/>
            <person name="Luo J."/>
            <person name="Bakalarski C.E."/>
            <person name="Zhao Z."/>
            <person name="Solimini N."/>
            <person name="Lerenthal Y."/>
            <person name="Shiloh Y."/>
            <person name="Gygi S.P."/>
            <person name="Elledge S.J."/>
        </authorList>
    </citation>
    <scope>PHOSPHORYLATION [LARGE SCALE ANALYSIS] AT THR-632</scope>
    <scope>IDENTIFICATION BY MASS SPECTROMETRY [LARGE SCALE ANALYSIS]</scope>
    <source>
        <tissue>Embryonic kidney</tissue>
    </source>
</reference>
<reference key="14">
    <citation type="journal article" date="2008" name="Cell Cycle">
        <title>KDM2A represses transcription of centromeric satellite repeats and maintains the heterochromatic state.</title>
        <authorList>
            <person name="Frescas D."/>
            <person name="Guardavaccaro D."/>
            <person name="Kuchay S.M."/>
            <person name="Kato H."/>
            <person name="Poleshko A."/>
            <person name="Basrur V."/>
            <person name="Elenitoba-Johnson K.S."/>
            <person name="Katz R.A."/>
            <person name="Pagano M."/>
        </authorList>
    </citation>
    <scope>FUNCTION</scope>
    <scope>INTERACTION WITH CBX5</scope>
    <scope>SUBCELLULAR LOCATION</scope>
    <scope>MUTAGENESIS OF CYS-571; CYS-574 AND CYS-577</scope>
</reference>
<reference key="15">
    <citation type="journal article" date="2008" name="J. Proteome Res.">
        <title>Combining protein-based IMAC, peptide-based IMAC, and MudPIT for efficient phosphoproteomic analysis.</title>
        <authorList>
            <person name="Cantin G.T."/>
            <person name="Yi W."/>
            <person name="Lu B."/>
            <person name="Park S.K."/>
            <person name="Xu T."/>
            <person name="Lee J.-D."/>
            <person name="Yates J.R. III"/>
        </authorList>
    </citation>
    <scope>PHOSPHORYLATION [LARGE SCALE ANALYSIS] AT THR-550; SER-558; THR-713 AND SER-731</scope>
    <scope>IDENTIFICATION BY MASS SPECTROMETRY [LARGE SCALE ANALYSIS]</scope>
    <source>
        <tissue>Cervix carcinoma</tissue>
    </source>
</reference>
<reference key="16">
    <citation type="journal article" date="2008" name="J. Proteome Res.">
        <title>Phosphorylation analysis of primary human T lymphocytes using sequential IMAC and titanium oxide enrichment.</title>
        <authorList>
            <person name="Carrascal M."/>
            <person name="Ovelleiro D."/>
            <person name="Casas V."/>
            <person name="Gay M."/>
            <person name="Abian J."/>
        </authorList>
    </citation>
    <scope>PHOSPHORYLATION [LARGE SCALE ANALYSIS] AT SER-692</scope>
    <scope>IDENTIFICATION BY MASS SPECTROMETRY [LARGE SCALE ANALYSIS]</scope>
    <source>
        <tissue>T-cell</tissue>
    </source>
</reference>
<reference key="17">
    <citation type="journal article" date="2008" name="Proc. Natl. Acad. Sci. U.S.A.">
        <title>A quantitative atlas of mitotic phosphorylation.</title>
        <authorList>
            <person name="Dephoure N."/>
            <person name="Zhou C."/>
            <person name="Villen J."/>
            <person name="Beausoleil S.A."/>
            <person name="Bakalarski C.E."/>
            <person name="Elledge S.J."/>
            <person name="Gygi S.P."/>
        </authorList>
    </citation>
    <scope>PHOSPHORYLATION [LARGE SCALE ANALYSIS] AT SER-390; THR-550; SER-558; THR-713; SER-731 AND SER-832</scope>
    <scope>IDENTIFICATION BY MASS SPECTROMETRY [LARGE SCALE ANALYSIS]</scope>
    <source>
        <tissue>Cervix carcinoma</tissue>
    </source>
</reference>
<reference key="18">
    <citation type="journal article" date="2009" name="Sci. Signal.">
        <title>Quantitative phosphoproteomic analysis of T cell receptor signaling reveals system-wide modulation of protein-protein interactions.</title>
        <authorList>
            <person name="Mayya V."/>
            <person name="Lundgren D.H."/>
            <person name="Hwang S.-I."/>
            <person name="Rezaul K."/>
            <person name="Wu L."/>
            <person name="Eng J.K."/>
            <person name="Rodionov V."/>
            <person name="Han D.K."/>
        </authorList>
    </citation>
    <scope>PHOSPHORYLATION [LARGE SCALE ANALYSIS] AT SER-28; THR-550; SER-692 AND SER-869</scope>
    <scope>IDENTIFICATION BY MASS SPECTROMETRY [LARGE SCALE ANALYSIS]</scope>
    <source>
        <tissue>Leukemic T-cell</tissue>
    </source>
</reference>
<reference key="19">
    <citation type="journal article" date="2010" name="Mol. Cell">
        <title>CpG islands recruit a histone H3 lysine 36 demethylase.</title>
        <authorList>
            <person name="Blackledge N.P."/>
            <person name="Zhou J.C."/>
            <person name="Tolstorukov M.Y."/>
            <person name="Farcas A.M."/>
            <person name="Park P.J."/>
            <person name="Klose R.J."/>
        </authorList>
    </citation>
    <scope>SUBCELLULAR LOCATION</scope>
    <scope>DOMAIN CXXC ZINC-FINGER</scope>
</reference>
<reference key="20">
    <citation type="journal article" date="2010" name="Sci. Signal.">
        <title>Quantitative phosphoproteomics reveals widespread full phosphorylation site occupancy during mitosis.</title>
        <authorList>
            <person name="Olsen J.V."/>
            <person name="Vermeulen M."/>
            <person name="Santamaria A."/>
            <person name="Kumar C."/>
            <person name="Miller M.L."/>
            <person name="Jensen L.J."/>
            <person name="Gnad F."/>
            <person name="Cox J."/>
            <person name="Jensen T.S."/>
            <person name="Nigg E.A."/>
            <person name="Brunak S."/>
            <person name="Mann M."/>
        </authorList>
    </citation>
    <scope>PHOSPHORYLATION [LARGE SCALE ANALYSIS] AT SER-28; SER-394; THR-550; SER-558; SER-869 AND SER-883</scope>
    <scope>IDENTIFICATION BY MASS SPECTROMETRY [LARGE SCALE ANALYSIS]</scope>
    <source>
        <tissue>Cervix carcinoma</tissue>
    </source>
</reference>
<reference key="21">
    <citation type="journal article" date="2011" name="Sci. Signal.">
        <title>System-wide temporal characterization of the proteome and phosphoproteome of human embryonic stem cell differentiation.</title>
        <authorList>
            <person name="Rigbolt K.T."/>
            <person name="Prokhorova T.A."/>
            <person name="Akimov V."/>
            <person name="Henningsen J."/>
            <person name="Johansen P.T."/>
            <person name="Kratchmarova I."/>
            <person name="Kassem M."/>
            <person name="Mann M."/>
            <person name="Olsen J.V."/>
            <person name="Blagoev B."/>
        </authorList>
    </citation>
    <scope>PHOSPHORYLATION [LARGE SCALE ANALYSIS] AT SER-28</scope>
    <scope>IDENTIFICATION BY MASS SPECTROMETRY [LARGE SCALE ANALYSIS]</scope>
</reference>
<reference key="22">
    <citation type="journal article" date="2013" name="J. Proteome Res.">
        <title>Toward a comprehensive characterization of a human cancer cell phosphoproteome.</title>
        <authorList>
            <person name="Zhou H."/>
            <person name="Di Palma S."/>
            <person name="Preisinger C."/>
            <person name="Peng M."/>
            <person name="Polat A.N."/>
            <person name="Heck A.J."/>
            <person name="Mohammed S."/>
        </authorList>
    </citation>
    <scope>PHOSPHORYLATION [LARGE SCALE ANALYSIS] AT SER-28; THR-550; SER-558; SER-692; SER-825; SER-832 AND SER-869</scope>
    <scope>IDENTIFICATION BY MASS SPECTROMETRY [LARGE SCALE ANALYSIS]</scope>
    <source>
        <tissue>Cervix carcinoma</tissue>
        <tissue>Erythroleukemia</tissue>
    </source>
</reference>
<reference key="23">
    <citation type="journal article" date="2014" name="J. Proteomics">
        <title>An enzyme assisted RP-RPLC approach for in-depth analysis of human liver phosphoproteome.</title>
        <authorList>
            <person name="Bian Y."/>
            <person name="Song C."/>
            <person name="Cheng K."/>
            <person name="Dong M."/>
            <person name="Wang F."/>
            <person name="Huang J."/>
            <person name="Sun D."/>
            <person name="Wang L."/>
            <person name="Ye M."/>
            <person name="Zou H."/>
        </authorList>
    </citation>
    <scope>IDENTIFICATION BY MASS SPECTROMETRY [LARGE SCALE ANALYSIS]</scope>
    <source>
        <tissue>Liver</tissue>
    </source>
</reference>
<reference key="24">
    <citation type="journal article" date="2015" name="J. Biol. Rhythms">
        <title>Fbxl11 Is a novel negative element of the mammalian circadian clock.</title>
        <authorList>
            <person name="Reischl S."/>
            <person name="Kramer A."/>
        </authorList>
    </citation>
    <scope>FUNCTION</scope>
    <scope>MUTAGENESIS OF HIS-212; CYS-574; CYS-577; CYS-620 AND CYS-623</scope>
    <scope>DOMAIN CXXC-TYPE ZINC-FINGER</scope>
</reference>
<reference key="25">
    <citation type="journal article" date="2017" name="Cell Chem. Biol.">
        <title>Potent and Selective KDM5 Inhibitor Stops Cellular Demethylation of H3K4me3 at Transcription Start Sites and Proliferation of MM1S Myeloma Cells.</title>
        <authorList>
            <person name="Tumber A."/>
            <person name="Nuzzi A."/>
            <person name="Hookway E.S."/>
            <person name="Hatch S.B."/>
            <person name="Velupillai S."/>
            <person name="Johansson C."/>
            <person name="Kawamura A."/>
            <person name="Savitsky P."/>
            <person name="Yapp C."/>
            <person name="Szykowska A."/>
            <person name="Wu N."/>
            <person name="Bountra C."/>
            <person name="Strain-Damerell C."/>
            <person name="Burgess-Brown N.A."/>
            <person name="Ruda G.F."/>
            <person name="Fedorov O."/>
            <person name="Munro S."/>
            <person name="England K.S."/>
            <person name="Nowak R.P."/>
            <person name="Schofield C.J."/>
            <person name="La Thangue N.B."/>
            <person name="Pawlyn C."/>
            <person name="Davies F."/>
            <person name="Morgan G."/>
            <person name="Athanasou N."/>
            <person name="Muller S."/>
            <person name="Oppermann U."/>
            <person name="Brennan P.E."/>
        </authorList>
    </citation>
    <scope>FUNCTION</scope>
    <scope>MUTAGENESIS OF 212-HIS--ASP-214</scope>
</reference>
<reference key="26">
    <citation type="journal article" date="2017" name="Nat. Struct. Mol. Biol.">
        <title>Site-specific mapping of the human SUMO proteome reveals co-modification with phosphorylation.</title>
        <authorList>
            <person name="Hendriks I.A."/>
            <person name="Lyon D."/>
            <person name="Young C."/>
            <person name="Jensen L.J."/>
            <person name="Vertegaal A.C."/>
            <person name="Nielsen M.L."/>
        </authorList>
    </citation>
    <scope>SUMOYLATION [LARGE SCALE ANALYSIS] AT LYS-505</scope>
    <scope>IDENTIFICATION BY MASS SPECTROMETRY [LARGE SCALE ANALYSIS]</scope>
</reference>
<reference evidence="22 23" key="27">
    <citation type="submission" date="2007-04" db="PDB data bank">
        <title>Structural basis for histone demethylation by JHDM1.</title>
        <authorList>
            <person name="Han Z."/>
            <person name="Liu P."/>
            <person name="Gu L."/>
            <person name="Zhang Y."/>
            <person name="Li H."/>
            <person name="Chen S."/>
            <person name="Chai J."/>
        </authorList>
    </citation>
    <scope>X-RAY CRYSTALLOGRAPHY (2.70 ANGSTROMS) OF 1-517 IN COMPLEX WITH IRON</scope>
</reference>
<reference evidence="24" key="28">
    <citation type="submission" date="2012-09" db="PDB data bank">
        <title>Crystal Structure of the Cxxc and Phd Domain of Human Lysine-Specific Demethylase 2A (Kdm2A)(Fbxl11).</title>
        <authorList>
            <person name="Allerston C.K."/>
            <person name="Watson A.A."/>
            <person name="Edlich C."/>
            <person name="Li B."/>
            <person name="Chen Y."/>
            <person name="Ball L."/>
            <person name="Krojer T."/>
            <person name="Arrowsmith C.H."/>
            <person name="Edwards A."/>
            <person name="Bountra C."/>
            <person name="von Delft F."/>
            <person name="Laue E.D."/>
            <person name="Gileadi O."/>
        </authorList>
    </citation>
    <scope>X-RAY CRYSTALLOGRAPHY (2.24 ANGSTROMS) OF 567-681 IN COMPLEX WITH ZINC</scope>
    <scope>ZINC-BINDING</scope>
</reference>
<reference evidence="25 26" key="29">
    <citation type="journal article" date="2018" name="Structure">
        <title>A Structure-Based Strategy for Engineering Selective Ubiquitin Variant Inhibitors of Skp1-Cul1-F-Box Ubiquitin Ligases.</title>
        <authorList>
            <person name="Gorelik M."/>
            <person name="Manczyk N."/>
            <person name="Pavlenco A."/>
            <person name="Kurinov I."/>
            <person name="Sidhu S.S."/>
            <person name="Sicheri F."/>
        </authorList>
    </citation>
    <scope>X-RAY CRYSTALLOGRAPHY (2.61 ANGSTROMS) OF 888-932 IN COMPLEX WITH SKP1 AND UBB</scope>
    <scope>INTERACTION OF SKP1-KDM2A COMPLEX WITH UBB</scope>
    <scope>MUTAGENESIS OF TRP-892</scope>
</reference>
<gene>
    <name type="primary">KDM2A</name>
    <name type="synonym">CXXC8</name>
    <name evidence="17" type="synonym">FBL11</name>
    <name type="synonym">FBL7</name>
    <name type="synonym">FBXL11</name>
    <name type="synonym">JHDM1A</name>
    <name type="synonym">KIAA1004</name>
</gene>
<name>KDM2A_HUMAN</name>
<accession>Q9Y2K7</accession>
<accession>D4QA03</accession>
<accession>E9PIL6</accession>
<accession>I3VM55</accession>
<accession>Q49A21</accession>
<accession>Q4G0M3</accession>
<accession>Q69YY8</accession>
<accession>Q9BVH5</accession>
<accession>Q9H7H5</accession>
<accession>Q9UK66</accession>
<dbReference type="EC" id="1.14.11.27" evidence="8"/>
<dbReference type="EMBL" id="AB023221">
    <property type="protein sequence ID" value="BAA76848.2"/>
    <property type="status" value="ALT_INIT"/>
    <property type="molecule type" value="mRNA"/>
</dbReference>
<dbReference type="EMBL" id="AB490246">
    <property type="protein sequence ID" value="BAJ05817.1"/>
    <property type="status" value="ALT_INIT"/>
    <property type="molecule type" value="mRNA"/>
</dbReference>
<dbReference type="EMBL" id="JQ710743">
    <property type="protein sequence ID" value="AFK81542.1"/>
    <property type="molecule type" value="mRNA"/>
</dbReference>
<dbReference type="EMBL" id="JQ710744">
    <property type="protein sequence ID" value="AFK81543.1"/>
    <property type="molecule type" value="mRNA"/>
</dbReference>
<dbReference type="EMBL" id="AK024505">
    <property type="protein sequence ID" value="BAB15795.1"/>
    <property type="status" value="ALT_FRAME"/>
    <property type="molecule type" value="mRNA"/>
</dbReference>
<dbReference type="EMBL" id="AP000729">
    <property type="status" value="NOT_ANNOTATED_CDS"/>
    <property type="molecule type" value="Genomic_DNA"/>
</dbReference>
<dbReference type="EMBL" id="AP001885">
    <property type="status" value="NOT_ANNOTATED_CDS"/>
    <property type="molecule type" value="Genomic_DNA"/>
</dbReference>
<dbReference type="EMBL" id="BC001203">
    <property type="protein sequence ID" value="AAH01203.1"/>
    <property type="molecule type" value="mRNA"/>
</dbReference>
<dbReference type="EMBL" id="BC047371">
    <property type="protein sequence ID" value="AAH47371.1"/>
    <property type="molecule type" value="mRNA"/>
</dbReference>
<dbReference type="EMBL" id="BC047486">
    <property type="protein sequence ID" value="AAH47486.1"/>
    <property type="molecule type" value="mRNA"/>
</dbReference>
<dbReference type="EMBL" id="BC064360">
    <property type="protein sequence ID" value="AAH64360.1"/>
    <property type="molecule type" value="mRNA"/>
</dbReference>
<dbReference type="EMBL" id="AF179221">
    <property type="protein sequence ID" value="AAD56012.1"/>
    <property type="status" value="ALT_INIT"/>
    <property type="molecule type" value="mRNA"/>
</dbReference>
<dbReference type="EMBL" id="AL117517">
    <property type="protein sequence ID" value="CAH10721.1"/>
    <property type="molecule type" value="mRNA"/>
</dbReference>
<dbReference type="CCDS" id="CCDS44657.1">
    <molecule id="Q9Y2K7-1"/>
</dbReference>
<dbReference type="CCDS" id="CCDS58148.1">
    <molecule id="Q9Y2K7-5"/>
</dbReference>
<dbReference type="RefSeq" id="NP_001243334.1">
    <molecule id="Q9Y2K7-5"/>
    <property type="nucleotide sequence ID" value="NM_001256405.2"/>
</dbReference>
<dbReference type="RefSeq" id="NP_036440.1">
    <molecule id="Q9Y2K7-1"/>
    <property type="nucleotide sequence ID" value="NM_012308.3"/>
</dbReference>
<dbReference type="RefSeq" id="XP_011543163.1">
    <molecule id="Q9Y2K7-2"/>
    <property type="nucleotide sequence ID" value="XM_011544861.2"/>
</dbReference>
<dbReference type="RefSeq" id="XP_054224099.1">
    <molecule id="Q9Y2K7-2"/>
    <property type="nucleotide sequence ID" value="XM_054368124.1"/>
</dbReference>
<dbReference type="PDB" id="2YU1">
    <property type="method" value="X-ray"/>
    <property type="resolution" value="2.70 A"/>
    <property type="chains" value="A=1-517"/>
</dbReference>
<dbReference type="PDB" id="2YU2">
    <property type="method" value="X-ray"/>
    <property type="resolution" value="2.70 A"/>
    <property type="chains" value="A=1-517"/>
</dbReference>
<dbReference type="PDB" id="4BBQ">
    <property type="method" value="X-ray"/>
    <property type="resolution" value="2.24 A"/>
    <property type="chains" value="A/B=567-681"/>
</dbReference>
<dbReference type="PDB" id="6BYH">
    <property type="method" value="X-ray"/>
    <property type="resolution" value="2.61 A"/>
    <property type="chains" value="E/F/I=888-932"/>
</dbReference>
<dbReference type="PDB" id="6C16">
    <property type="method" value="X-ray"/>
    <property type="resolution" value="3.27 A"/>
    <property type="chains" value="C/F=888-932"/>
</dbReference>
<dbReference type="PDB" id="7UV9">
    <property type="method" value="EM"/>
    <property type="resolution" value="3.20 A"/>
    <property type="chains" value="K=2-685"/>
</dbReference>
<dbReference type="PDBsum" id="2YU1"/>
<dbReference type="PDBsum" id="2YU2"/>
<dbReference type="PDBsum" id="4BBQ"/>
<dbReference type="PDBsum" id="6BYH"/>
<dbReference type="PDBsum" id="6C16"/>
<dbReference type="PDBsum" id="7UV9"/>
<dbReference type="EMDB" id="EMD-26809"/>
<dbReference type="EMDB" id="EMD-26810"/>
<dbReference type="SMR" id="Q9Y2K7"/>
<dbReference type="BioGRID" id="116639">
    <property type="interactions" value="104"/>
</dbReference>
<dbReference type="ComplexPortal" id="CPX-2538">
    <property type="entry name" value="SCF E3 ubiquitin ligase complex, KDM2A variant"/>
</dbReference>
<dbReference type="DIP" id="DIP-34596N"/>
<dbReference type="FunCoup" id="Q9Y2K7">
    <property type="interactions" value="3044"/>
</dbReference>
<dbReference type="IntAct" id="Q9Y2K7">
    <property type="interactions" value="44"/>
</dbReference>
<dbReference type="MINT" id="Q9Y2K7"/>
<dbReference type="STRING" id="9606.ENSP00000432786"/>
<dbReference type="BindingDB" id="Q9Y2K7"/>
<dbReference type="ChEMBL" id="CHEMBL1938210"/>
<dbReference type="GuidetoPHARMACOLOGY" id="2671"/>
<dbReference type="CarbonylDB" id="Q9Y2K7"/>
<dbReference type="GlyGen" id="Q9Y2K7">
    <property type="glycosylation" value="2 sites, 1 O-linked glycan (1 site)"/>
</dbReference>
<dbReference type="iPTMnet" id="Q9Y2K7"/>
<dbReference type="PhosphoSitePlus" id="Q9Y2K7"/>
<dbReference type="SwissPalm" id="Q9Y2K7"/>
<dbReference type="BioMuta" id="KDM2A"/>
<dbReference type="DMDM" id="38257795"/>
<dbReference type="jPOST" id="Q9Y2K7"/>
<dbReference type="MassIVE" id="Q9Y2K7"/>
<dbReference type="PaxDb" id="9606-ENSP00000432786"/>
<dbReference type="PeptideAtlas" id="Q9Y2K7"/>
<dbReference type="ProteomicsDB" id="12834"/>
<dbReference type="ProteomicsDB" id="20849"/>
<dbReference type="ProteomicsDB" id="85827">
    <molecule id="Q9Y2K7-1"/>
</dbReference>
<dbReference type="ProteomicsDB" id="85828">
    <molecule id="Q9Y2K7-2"/>
</dbReference>
<dbReference type="ProteomicsDB" id="85829">
    <molecule id="Q9Y2K7-3"/>
</dbReference>
<dbReference type="Pumba" id="Q9Y2K7"/>
<dbReference type="ABCD" id="Q9Y2K7">
    <property type="antibodies" value="1 sequenced antibody"/>
</dbReference>
<dbReference type="Antibodypedia" id="3222">
    <property type="antibodies" value="281 antibodies from 33 providers"/>
</dbReference>
<dbReference type="DNASU" id="22992"/>
<dbReference type="Ensembl" id="ENST00000398645.6">
    <molecule id="Q9Y2K7-3"/>
    <property type="protein sequence ID" value="ENSP00000381640.2"/>
    <property type="gene ID" value="ENSG00000173120.15"/>
</dbReference>
<dbReference type="Ensembl" id="ENST00000529006.7">
    <molecule id="Q9Y2K7-1"/>
    <property type="protein sequence ID" value="ENSP00000432786.1"/>
    <property type="gene ID" value="ENSG00000173120.15"/>
</dbReference>
<dbReference type="Ensembl" id="ENST00000530342.2">
    <molecule id="Q9Y2K7-5"/>
    <property type="protein sequence ID" value="ENSP00000435776.1"/>
    <property type="gene ID" value="ENSG00000173120.15"/>
</dbReference>
<dbReference type="GeneID" id="22992"/>
<dbReference type="KEGG" id="hsa:22992"/>
<dbReference type="MANE-Select" id="ENST00000529006.7">
    <property type="protein sequence ID" value="ENSP00000432786.1"/>
    <property type="RefSeq nucleotide sequence ID" value="NM_012308.3"/>
    <property type="RefSeq protein sequence ID" value="NP_036440.1"/>
</dbReference>
<dbReference type="UCSC" id="uc001ojw.4">
    <molecule id="Q9Y2K7-1"/>
    <property type="organism name" value="human"/>
</dbReference>
<dbReference type="AGR" id="HGNC:13606"/>
<dbReference type="CTD" id="22992"/>
<dbReference type="DisGeNET" id="22992"/>
<dbReference type="GeneCards" id="KDM2A"/>
<dbReference type="HGNC" id="HGNC:13606">
    <property type="gene designation" value="KDM2A"/>
</dbReference>
<dbReference type="HPA" id="ENSG00000173120">
    <property type="expression patterns" value="Low tissue specificity"/>
</dbReference>
<dbReference type="MIM" id="605657">
    <property type="type" value="gene"/>
</dbReference>
<dbReference type="neXtProt" id="NX_Q9Y2K7"/>
<dbReference type="OpenTargets" id="ENSG00000173120"/>
<dbReference type="PharmGKB" id="PA164721195"/>
<dbReference type="VEuPathDB" id="HostDB:ENSG00000173120"/>
<dbReference type="eggNOG" id="KOG1633">
    <property type="taxonomic scope" value="Eukaryota"/>
</dbReference>
<dbReference type="eggNOG" id="KOG1947">
    <property type="taxonomic scope" value="Eukaryota"/>
</dbReference>
<dbReference type="GeneTree" id="ENSGT00940000155484"/>
<dbReference type="HOGENOM" id="CLU_003540_4_0_1"/>
<dbReference type="InParanoid" id="Q9Y2K7"/>
<dbReference type="OMA" id="XQDNRSK"/>
<dbReference type="OrthoDB" id="5876800at2759"/>
<dbReference type="PAN-GO" id="Q9Y2K7">
    <property type="GO annotations" value="4 GO annotations based on evolutionary models"/>
</dbReference>
<dbReference type="PhylomeDB" id="Q9Y2K7"/>
<dbReference type="TreeFam" id="TF106480"/>
<dbReference type="BioCyc" id="MetaCyc:HS10620-MONOMER"/>
<dbReference type="PathwayCommons" id="Q9Y2K7"/>
<dbReference type="Reactome" id="R-HSA-3214842">
    <property type="pathway name" value="HDMs demethylate histones"/>
</dbReference>
<dbReference type="SignaLink" id="Q9Y2K7"/>
<dbReference type="SIGNOR" id="Q9Y2K7"/>
<dbReference type="BioGRID-ORCS" id="22992">
    <property type="hits" value="425 hits in 1217 CRISPR screens"/>
</dbReference>
<dbReference type="CD-CODE" id="3FEF42AA">
    <property type="entry name" value="Lysine demethylase condensate"/>
</dbReference>
<dbReference type="CD-CODE" id="91857CE7">
    <property type="entry name" value="Nucleolus"/>
</dbReference>
<dbReference type="ChiTaRS" id="KDM2A">
    <property type="organism name" value="human"/>
</dbReference>
<dbReference type="EvolutionaryTrace" id="Q9Y2K7"/>
<dbReference type="GeneWiki" id="KDM2A"/>
<dbReference type="GenomeRNAi" id="22992"/>
<dbReference type="Pharos" id="Q9Y2K7">
    <property type="development level" value="Tchem"/>
</dbReference>
<dbReference type="PRO" id="PR:Q9Y2K7"/>
<dbReference type="Proteomes" id="UP000005640">
    <property type="component" value="Chromosome 11"/>
</dbReference>
<dbReference type="RNAct" id="Q9Y2K7">
    <property type="molecule type" value="protein"/>
</dbReference>
<dbReference type="Bgee" id="ENSG00000173120">
    <property type="expression patterns" value="Expressed in amniotic fluid and 209 other cell types or tissues"/>
</dbReference>
<dbReference type="ExpressionAtlas" id="Q9Y2K7">
    <property type="expression patterns" value="baseline and differential"/>
</dbReference>
<dbReference type="GO" id="GO:0005694">
    <property type="term" value="C:chromosome"/>
    <property type="evidence" value="ECO:0007669"/>
    <property type="project" value="UniProtKB-SubCell"/>
</dbReference>
<dbReference type="GO" id="GO:0005654">
    <property type="term" value="C:nucleoplasm"/>
    <property type="evidence" value="ECO:0000314"/>
    <property type="project" value="HPA"/>
</dbReference>
<dbReference type="GO" id="GO:0032452">
    <property type="term" value="F:histone demethylase activity"/>
    <property type="evidence" value="ECO:0000318"/>
    <property type="project" value="GO_Central"/>
</dbReference>
<dbReference type="GO" id="GO:0051864">
    <property type="term" value="F:histone H3K36 demethylase activity"/>
    <property type="evidence" value="ECO:0000315"/>
    <property type="project" value="UniProtKB"/>
</dbReference>
<dbReference type="GO" id="GO:0140680">
    <property type="term" value="F:histone H3K36me/H3K36me2 demethylase activity"/>
    <property type="evidence" value="ECO:0007669"/>
    <property type="project" value="UniProtKB-EC"/>
</dbReference>
<dbReference type="GO" id="GO:0003712">
    <property type="term" value="F:transcription coregulator activity"/>
    <property type="evidence" value="ECO:0000318"/>
    <property type="project" value="GO_Central"/>
</dbReference>
<dbReference type="GO" id="GO:0045322">
    <property type="term" value="F:unmethylated CpG binding"/>
    <property type="evidence" value="ECO:0000314"/>
    <property type="project" value="UniProtKB"/>
</dbReference>
<dbReference type="GO" id="GO:0008270">
    <property type="term" value="F:zinc ion binding"/>
    <property type="evidence" value="ECO:0000314"/>
    <property type="project" value="UniProtKB"/>
</dbReference>
<dbReference type="GO" id="GO:0006338">
    <property type="term" value="P:chromatin remodeling"/>
    <property type="evidence" value="ECO:0000318"/>
    <property type="project" value="GO_Central"/>
</dbReference>
<dbReference type="GO" id="GO:0032922">
    <property type="term" value="P:circadian regulation of gene expression"/>
    <property type="evidence" value="ECO:0000315"/>
    <property type="project" value="UniProtKB"/>
</dbReference>
<dbReference type="GO" id="GO:0006303">
    <property type="term" value="P:double-strand break repair via nonhomologous end joining"/>
    <property type="evidence" value="ECO:0000315"/>
    <property type="project" value="UniProtKB"/>
</dbReference>
<dbReference type="GO" id="GO:0010944">
    <property type="term" value="P:negative regulation of transcription by competitive promoter binding"/>
    <property type="evidence" value="ECO:0000315"/>
    <property type="project" value="UniProtKB"/>
</dbReference>
<dbReference type="GO" id="GO:0042752">
    <property type="term" value="P:regulation of circadian rhythm"/>
    <property type="evidence" value="ECO:0000315"/>
    <property type="project" value="UniProtKB"/>
</dbReference>
<dbReference type="GO" id="GO:0006357">
    <property type="term" value="P:regulation of transcription by RNA polymerase II"/>
    <property type="evidence" value="ECO:0000318"/>
    <property type="project" value="GO_Central"/>
</dbReference>
<dbReference type="CDD" id="cd21784">
    <property type="entry name" value="CTD_KDM2A"/>
    <property type="match status" value="1"/>
</dbReference>
<dbReference type="CDD" id="cd22181">
    <property type="entry name" value="F-box_FBXL11"/>
    <property type="match status" value="1"/>
</dbReference>
<dbReference type="CDD" id="cd15643">
    <property type="entry name" value="PHD_KDM2A"/>
    <property type="match status" value="1"/>
</dbReference>
<dbReference type="FunFam" id="2.60.120.650:FF:000005">
    <property type="entry name" value="lysine-specific demethylase 2A isoform X1"/>
    <property type="match status" value="1"/>
</dbReference>
<dbReference type="FunFam" id="3.80.10.10:FF:000011">
    <property type="entry name" value="Lysine-specific demethylase 2B isoform X1"/>
    <property type="match status" value="1"/>
</dbReference>
<dbReference type="Gene3D" id="1.20.58.1360">
    <property type="match status" value="1"/>
</dbReference>
<dbReference type="Gene3D" id="2.60.120.650">
    <property type="entry name" value="Cupin"/>
    <property type="match status" value="1"/>
</dbReference>
<dbReference type="Gene3D" id="3.80.10.10">
    <property type="entry name" value="Ribonuclease Inhibitor"/>
    <property type="match status" value="1"/>
</dbReference>
<dbReference type="Gene3D" id="3.30.40.10">
    <property type="entry name" value="Zinc/RING finger domain, C3HC4 (zinc finger)"/>
    <property type="match status" value="1"/>
</dbReference>
<dbReference type="InterPro" id="IPR001810">
    <property type="entry name" value="F-box_dom"/>
</dbReference>
<dbReference type="InterPro" id="IPR041070">
    <property type="entry name" value="JHD"/>
</dbReference>
<dbReference type="InterPro" id="IPR050690">
    <property type="entry name" value="JHDM1_Histone_Demethylase"/>
</dbReference>
<dbReference type="InterPro" id="IPR003347">
    <property type="entry name" value="JmjC_dom"/>
</dbReference>
<dbReference type="InterPro" id="IPR006553">
    <property type="entry name" value="Leu-rich_rpt_Cys-con_subtyp"/>
</dbReference>
<dbReference type="InterPro" id="IPR032675">
    <property type="entry name" value="LRR_dom_sf"/>
</dbReference>
<dbReference type="InterPro" id="IPR019786">
    <property type="entry name" value="Zinc_finger_PHD-type_CS"/>
</dbReference>
<dbReference type="InterPro" id="IPR002857">
    <property type="entry name" value="Znf_CXXC"/>
</dbReference>
<dbReference type="InterPro" id="IPR011011">
    <property type="entry name" value="Znf_FYVE_PHD"/>
</dbReference>
<dbReference type="InterPro" id="IPR001965">
    <property type="entry name" value="Znf_PHD"/>
</dbReference>
<dbReference type="InterPro" id="IPR019787">
    <property type="entry name" value="Znf_PHD-finger"/>
</dbReference>
<dbReference type="InterPro" id="IPR013083">
    <property type="entry name" value="Znf_RING/FYVE/PHD"/>
</dbReference>
<dbReference type="PANTHER" id="PTHR23123">
    <property type="entry name" value="PHD/F-BOX CONTAINING PROTEIN"/>
    <property type="match status" value="1"/>
</dbReference>
<dbReference type="Pfam" id="PF12937">
    <property type="entry name" value="F-box-like"/>
    <property type="match status" value="1"/>
</dbReference>
<dbReference type="Pfam" id="PF17811">
    <property type="entry name" value="JHD"/>
    <property type="match status" value="1"/>
</dbReference>
<dbReference type="Pfam" id="PF16866">
    <property type="entry name" value="PHD_4"/>
    <property type="match status" value="1"/>
</dbReference>
<dbReference type="Pfam" id="PF02008">
    <property type="entry name" value="zf-CXXC"/>
    <property type="match status" value="1"/>
</dbReference>
<dbReference type="SMART" id="SM00558">
    <property type="entry name" value="JmjC"/>
    <property type="match status" value="1"/>
</dbReference>
<dbReference type="SMART" id="SM00367">
    <property type="entry name" value="LRR_CC"/>
    <property type="match status" value="3"/>
</dbReference>
<dbReference type="SMART" id="SM00249">
    <property type="entry name" value="PHD"/>
    <property type="match status" value="1"/>
</dbReference>
<dbReference type="SUPFAM" id="SSF51197">
    <property type="entry name" value="Clavaminate synthase-like"/>
    <property type="match status" value="1"/>
</dbReference>
<dbReference type="SUPFAM" id="SSF57903">
    <property type="entry name" value="FYVE/PHD zinc finger"/>
    <property type="match status" value="1"/>
</dbReference>
<dbReference type="SUPFAM" id="SSF52047">
    <property type="entry name" value="RNI-like"/>
    <property type="match status" value="1"/>
</dbReference>
<dbReference type="PROSITE" id="PS51184">
    <property type="entry name" value="JMJC"/>
    <property type="match status" value="1"/>
</dbReference>
<dbReference type="PROSITE" id="PS51058">
    <property type="entry name" value="ZF_CXXC"/>
    <property type="match status" value="1"/>
</dbReference>
<dbReference type="PROSITE" id="PS01359">
    <property type="entry name" value="ZF_PHD_1"/>
    <property type="match status" value="1"/>
</dbReference>
<dbReference type="PROSITE" id="PS50016">
    <property type="entry name" value="ZF_PHD_2"/>
    <property type="match status" value="1"/>
</dbReference>
<keyword id="KW-0002">3D-structure</keyword>
<keyword id="KW-0013">ADP-ribosylation</keyword>
<keyword id="KW-0025">Alternative splicing</keyword>
<keyword id="KW-0090">Biological rhythms</keyword>
<keyword id="KW-0156">Chromatin regulator</keyword>
<keyword id="KW-0158">Chromosome</keyword>
<keyword id="KW-0223">Dioxygenase</keyword>
<keyword id="KW-0238">DNA-binding</keyword>
<keyword id="KW-0408">Iron</keyword>
<keyword id="KW-1017">Isopeptide bond</keyword>
<keyword id="KW-0433">Leucine-rich repeat</keyword>
<keyword id="KW-0479">Metal-binding</keyword>
<keyword id="KW-0539">Nucleus</keyword>
<keyword id="KW-0560">Oxidoreductase</keyword>
<keyword id="KW-0597">Phosphoprotein</keyword>
<keyword id="KW-1267">Proteomics identification</keyword>
<keyword id="KW-1185">Reference proteome</keyword>
<keyword id="KW-0677">Repeat</keyword>
<keyword id="KW-0678">Repressor</keyword>
<keyword id="KW-0804">Transcription</keyword>
<keyword id="KW-0805">Transcription regulation</keyword>
<keyword id="KW-0832">Ubl conjugation</keyword>
<keyword id="KW-0833">Ubl conjugation pathway</keyword>
<keyword id="KW-0862">Zinc</keyword>
<keyword id="KW-0863">Zinc-finger</keyword>
<comment type="function">
    <text evidence="8 9 11 12">Histone demethylase that specifically demethylates 'Lys-36' of histone H3, thereby playing a central role in histone code. Preferentially demethylates dimethylated H3 'Lys-36' residue while it has weak or no activity for mono- and tri-methylated H3 'Lys-36'. May also recognize and bind to some phosphorylated proteins and promote their ubiquitination and degradation. Required to maintain the heterochromatic state. Associates with centromeres and represses transcription of small non-coding RNAs that are encoded by the clusters of satellite repeats at the centromere. Required to sustain centromeric integrity and genomic stability, particularly during mitosis. Regulates circadian gene expression by repressing the transcriptional activator activity of CLOCK-BMAL1 heterodimer and RORA in a catalytically-independent manner (PubMed:26037310).</text>
</comment>
<comment type="catalytic activity">
    <reaction evidence="8">
        <text>N(6),N(6)-dimethyl-L-lysyl(36)-[histone H3] + 2 2-oxoglutarate + 2 O2 = L-lysyl(36)-[histone H3] + 2 formaldehyde + 2 succinate + 2 CO2</text>
        <dbReference type="Rhea" id="RHEA:42032"/>
        <dbReference type="Rhea" id="RHEA-COMP:9785"/>
        <dbReference type="Rhea" id="RHEA-COMP:9787"/>
        <dbReference type="ChEBI" id="CHEBI:15379"/>
        <dbReference type="ChEBI" id="CHEBI:16526"/>
        <dbReference type="ChEBI" id="CHEBI:16810"/>
        <dbReference type="ChEBI" id="CHEBI:16842"/>
        <dbReference type="ChEBI" id="CHEBI:29969"/>
        <dbReference type="ChEBI" id="CHEBI:30031"/>
        <dbReference type="ChEBI" id="CHEBI:61976"/>
        <dbReference type="EC" id="1.14.11.27"/>
    </reaction>
</comment>
<comment type="cofactor">
    <cofactor evidence="8">
        <name>Fe(2+)</name>
        <dbReference type="ChEBI" id="CHEBI:29033"/>
    </cofactor>
    <text evidence="8">Binds 1 Fe(2+) ion per subunit.</text>
</comment>
<comment type="subunit">
    <text evidence="9 13">Interacts with CBX5/HP1A; the interaction promotes CBX5 localization to chromatin (PubMed:19001877). The SKP1-KDM2A complex interacts with UBB (PubMed:30033217). Part of a SCF (SKP1-cullin-F-box) protein ligase complex (PubMed:30033217).</text>
</comment>
<comment type="interaction">
    <interactant intactId="EBI-765758">
        <id>Q9Y2K7</id>
    </interactant>
    <interactant intactId="EBI-73886">
        <id>Q04206</id>
        <label>RELA</label>
    </interactant>
    <organismsDiffer>false</organismsDiffer>
    <experiments>2</experiments>
</comment>
<comment type="interaction">
    <interactant intactId="EBI-765758">
        <id>Q9Y2K7</id>
    </interactant>
    <interactant intactId="EBI-307486">
        <id>P63208</id>
        <label>SKP1</label>
    </interactant>
    <organismsDiffer>false</organismsDiffer>
    <experiments>6</experiments>
</comment>
<comment type="subcellular location">
    <subcellularLocation>
        <location evidence="9 10">Nucleus</location>
        <location evidence="9 10">Nucleoplasm</location>
    </subcellularLocation>
    <subcellularLocation>
        <location evidence="9 10">Chromosome</location>
    </subcellularLocation>
    <text evidence="9 10">Punctate expression throughout the nucleoplasm and enriched in the perinucleolar region (PubMed:19001877, PubMed:20417597). Specifically nucleates at CpG islands where it's presence results in chromatin depleted in H3K36me2 (PubMed:19001877, PubMed:20417597).</text>
</comment>
<comment type="alternative products">
    <event type="alternative splicing"/>
    <isoform>
        <id>Q9Y2K7-1</id>
        <name>1</name>
        <sequence type="displayed"/>
    </isoform>
    <isoform>
        <id>Q9Y2K7-2</id>
        <name>2</name>
        <sequence type="described" ref="VSP_017468"/>
    </isoform>
    <isoform>
        <id>Q9Y2K7-4</id>
        <name>4</name>
        <sequence type="described" ref="VSP_046938"/>
    </isoform>
    <isoform>
        <id>Q9Y2K7-5</id>
        <name>5</name>
        <sequence type="described" ref="VSP_046939 VSP_046940"/>
    </isoform>
    <isoform>
        <id>Q9Y2K7-3</id>
        <name>3</name>
        <sequence type="described" ref="VSP_017469 VSP_017470"/>
    </isoform>
</comment>
<comment type="tissue specificity">
    <text evidence="7">Widely expressed, with highest levels in brain, testis and ovary, followed by lung.</text>
</comment>
<comment type="domain">
    <text evidence="8">The JmjC domain mediates demethylation activity and is required for satellite silencing.</text>
</comment>
<comment type="domain">
    <text evidence="10 11">The CXXC zinc finger preferentially recognizes nonmethylated CpG DNA, and binding is blocked when the CpG DNA is methylated (PubMed:20417597). It is essential for its ability to repress the transcriptional activator activity of CLOCK-BMAL1 heterodimer (PubMed:26037310).</text>
</comment>
<comment type="domain">
    <text evidence="13">The F-box domain mediates interaction with UBB.</text>
</comment>
<comment type="PTM">
    <text evidence="2">Mono-ADP-ribosylated at Arg-1020 in response to DNA damage, leading to displacement from chromatin, resulting in increased dimethylation of histone H3 at 'Lys-36'.</text>
</comment>
<comment type="similarity">
    <text evidence="20">Belongs to the JHDM1 histone demethylase family.</text>
</comment>
<comment type="sequence caution" evidence="20">
    <conflict type="erroneous initiation">
        <sequence resource="EMBL-CDS" id="AAD56012"/>
    </conflict>
    <text>Truncated N-terminus.</text>
</comment>
<comment type="sequence caution" evidence="20">
    <conflict type="erroneous initiation">
        <sequence resource="EMBL-CDS" id="BAA76848"/>
    </conflict>
    <text>Extended N-terminus.</text>
</comment>
<comment type="sequence caution" evidence="20">
    <conflict type="frameshift">
        <sequence resource="EMBL-CDS" id="BAB15795"/>
    </conflict>
</comment>
<comment type="sequence caution" evidence="20">
    <conflict type="erroneous initiation">
        <sequence resource="EMBL-CDS" id="BAJ05817"/>
    </conflict>
    <text>Truncated N-terminus.</text>
</comment>
<proteinExistence type="evidence at protein level"/>
<organism>
    <name type="scientific">Homo sapiens</name>
    <name type="common">Human</name>
    <dbReference type="NCBI Taxonomy" id="9606"/>
    <lineage>
        <taxon>Eukaryota</taxon>
        <taxon>Metazoa</taxon>
        <taxon>Chordata</taxon>
        <taxon>Craniata</taxon>
        <taxon>Vertebrata</taxon>
        <taxon>Euteleostomi</taxon>
        <taxon>Mammalia</taxon>
        <taxon>Eutheria</taxon>
        <taxon>Euarchontoglires</taxon>
        <taxon>Primates</taxon>
        <taxon>Haplorrhini</taxon>
        <taxon>Catarrhini</taxon>
        <taxon>Hominidae</taxon>
        <taxon>Homo</taxon>
    </lineage>
</organism>
<sequence length="1162" mass="132793">MEPEEERIRYSQRLRGTMRRRYEDDGISDDEIEGKRTFDLEEKLHTNKYNANFVTFMEGKDFNVEYIQRGGLRDPLIFKNSDGLGIKMPDPDFTVNDVKMCVGSRRMVDVMDVNTQKGIEMTMAQWTRYYETPEEEREKLYNVISLEFSHTRLENMVQRPSTVDFIDWVDNMWPRHLKESQTESTNAILEMQYPKVQKYCLMSVRGCYTDFHVDFGGTSVWYHIHQGGKVFWLIPPTAHNLELYENWLLSGKQGDIFLGDRVSDCQRIELKQGYTFVIPSGWIHAVYTPTDTLVFGGNFLHSFNIPMQLKIYNIEDRTRVPNKFRYPFYYEMCWYVLERYVYCITNRSHLTKEFQKESLSMDLELNGLESGNGDEEAVDREPRRLSSRRSVLTSPVANGVNLDYDGLGKTCRSLPSLKKTLAGDSSSDCSRGSHNGQVWDPQCAPRKDRQVHLTHFELEGLRCLVDKLESLPLHKKCVPTGIEDEDALIADVKILLEELANSDPKLALTGVPIVQWPKRDKLKFPTRPKVRVPTIPITKPHTMKPAPRLTPVRPAAASPIVSGARRRRVRCRKCKACVQGECGVCHYCRDMKKFGGPGRMKQSCVLRQCLAPRLPHSVTCSLCGEVDQNEETQDFEKKLMECCICNEIVHPGCLQMDGEGLLNEELPNCWECPKCYQEDSSEKAQKRKMEESDEEAVQAKVLRPLRSCDEPLTPPPHSPTSMLQLIHDPVSPRGMVTRSSPGAGPSDHHSASRDERFKRRQLLRLQATERTMVREKENNPSGKKELSEVEKAKIRGSYLTVTLQRPTKELHGTSIVPKLQAITASSANLRHSPRVLVQHCPARTPQRGDEEGLGGEEEEEEEEEEEDDSAEEGGAARLNGRGSWAQDGDESWMQREVWMSVFRYLSRRELCECMRVCKTWYKWCCDKRLWTKIDLSRCKAIVPQALSGIIKRQPVSLDLSWTNISKKQLTWLVNRLPGLKDLLLAGCSWSAVSALSTSSCPLLRTLDLRWAVGIKDPQIRDLLTPPADKPGQDNRSKLRNMTDFRLAGLDITDATLRLIIRHMPLLSRLDLSHCSHLTDQSSNLLTAVGSSTRYSLTELNMAGCNKLTDQTLIYLRRIANVTLIDLRGCKQITRKACEHFISDLSINSLYCLSDEKLIQKIS</sequence>
<protein>
    <recommendedName>
        <fullName>Lysine-specific demethylase 2A</fullName>
        <ecNumber evidence="8">1.14.11.27</ecNumber>
    </recommendedName>
    <alternativeName>
        <fullName>CXXC-type zinc finger protein 8</fullName>
    </alternativeName>
    <alternativeName>
        <fullName>F-box and leucine-rich repeat protein 11</fullName>
    </alternativeName>
    <alternativeName>
        <fullName>F-box protein FBL7</fullName>
    </alternativeName>
    <alternativeName>
        <fullName>F-box protein Lilina</fullName>
    </alternativeName>
    <alternativeName>
        <fullName>F-box/LRR-repeat protein 11</fullName>
    </alternativeName>
    <alternativeName>
        <fullName>JmjC domain-containing histone demethylation protein 1A</fullName>
    </alternativeName>
    <alternativeName>
        <fullName>[Histone-H3]-lysine-36 demethylase 1A</fullName>
    </alternativeName>
</protein>